<name>CISD2_DANRE</name>
<proteinExistence type="evidence at transcript level"/>
<sequence length="135" mass="15485">MVLESISKIIKIQLPAYLKKLPLPETIGGFARLTVSEWLRLLPLLGILALLGYLTIRPFLPKKKKQRDSLINLKIQKENPKVVNEIDIEDLRTPNVCYCRCWRSKTFPVCDKSHIKHNELTGDNVGPLILKKKTL</sequence>
<keyword id="KW-0001">2Fe-2S</keyword>
<keyword id="KW-0072">Autophagy</keyword>
<keyword id="KW-0256">Endoplasmic reticulum</keyword>
<keyword id="KW-0408">Iron</keyword>
<keyword id="KW-0411">Iron-sulfur</keyword>
<keyword id="KW-0472">Membrane</keyword>
<keyword id="KW-0479">Metal-binding</keyword>
<keyword id="KW-0496">Mitochondrion</keyword>
<keyword id="KW-1000">Mitochondrion outer membrane</keyword>
<keyword id="KW-1185">Reference proteome</keyword>
<keyword id="KW-0812">Transmembrane</keyword>
<keyword id="KW-1133">Transmembrane helix</keyword>
<organism>
    <name type="scientific">Danio rerio</name>
    <name type="common">Zebrafish</name>
    <name type="synonym">Brachydanio rerio</name>
    <dbReference type="NCBI Taxonomy" id="7955"/>
    <lineage>
        <taxon>Eukaryota</taxon>
        <taxon>Metazoa</taxon>
        <taxon>Chordata</taxon>
        <taxon>Craniata</taxon>
        <taxon>Vertebrata</taxon>
        <taxon>Euteleostomi</taxon>
        <taxon>Actinopterygii</taxon>
        <taxon>Neopterygii</taxon>
        <taxon>Teleostei</taxon>
        <taxon>Ostariophysi</taxon>
        <taxon>Cypriniformes</taxon>
        <taxon>Danionidae</taxon>
        <taxon>Danioninae</taxon>
        <taxon>Danio</taxon>
    </lineage>
</organism>
<evidence type="ECO:0000250" key="1"/>
<evidence type="ECO:0000255" key="2"/>
<evidence type="ECO:0000305" key="3"/>
<protein>
    <recommendedName>
        <fullName>CDGSH iron-sulfur domain-containing protein 2</fullName>
    </recommendedName>
</protein>
<reference key="1">
    <citation type="journal article" date="2004" name="Proc. Natl. Acad. Sci. U.S.A.">
        <title>Hematopoietic gene expression profile in zebrafish kidney marrow.</title>
        <authorList>
            <person name="Song H.-D."/>
            <person name="Sun X.-J."/>
            <person name="Deng M."/>
            <person name="Zhang G.-W."/>
            <person name="Zhou Y."/>
            <person name="Wu X.-Y."/>
            <person name="Sheng Y."/>
            <person name="Chen Y."/>
            <person name="Ruan Z."/>
            <person name="Jiang C.-L."/>
            <person name="Fan H.-Y."/>
            <person name="Zon L.I."/>
            <person name="Kanki J.P."/>
            <person name="Liu T.X."/>
            <person name="Look A.T."/>
            <person name="Chen Z."/>
        </authorList>
    </citation>
    <scope>NUCLEOTIDE SEQUENCE [LARGE SCALE MRNA]</scope>
    <source>
        <tissue>Kidney marrow</tissue>
    </source>
</reference>
<reference key="2">
    <citation type="journal article" date="2013" name="Nature">
        <title>The zebrafish reference genome sequence and its relationship to the human genome.</title>
        <authorList>
            <person name="Howe K."/>
            <person name="Clark M.D."/>
            <person name="Torroja C.F."/>
            <person name="Torrance J."/>
            <person name="Berthelot C."/>
            <person name="Muffato M."/>
            <person name="Collins J.E."/>
            <person name="Humphray S."/>
            <person name="McLaren K."/>
            <person name="Matthews L."/>
            <person name="McLaren S."/>
            <person name="Sealy I."/>
            <person name="Caccamo M."/>
            <person name="Churcher C."/>
            <person name="Scott C."/>
            <person name="Barrett J.C."/>
            <person name="Koch R."/>
            <person name="Rauch G.J."/>
            <person name="White S."/>
            <person name="Chow W."/>
            <person name="Kilian B."/>
            <person name="Quintais L.T."/>
            <person name="Guerra-Assuncao J.A."/>
            <person name="Zhou Y."/>
            <person name="Gu Y."/>
            <person name="Yen J."/>
            <person name="Vogel J.H."/>
            <person name="Eyre T."/>
            <person name="Redmond S."/>
            <person name="Banerjee R."/>
            <person name="Chi J."/>
            <person name="Fu B."/>
            <person name="Langley E."/>
            <person name="Maguire S.F."/>
            <person name="Laird G.K."/>
            <person name="Lloyd D."/>
            <person name="Kenyon E."/>
            <person name="Donaldson S."/>
            <person name="Sehra H."/>
            <person name="Almeida-King J."/>
            <person name="Loveland J."/>
            <person name="Trevanion S."/>
            <person name="Jones M."/>
            <person name="Quail M."/>
            <person name="Willey D."/>
            <person name="Hunt A."/>
            <person name="Burton J."/>
            <person name="Sims S."/>
            <person name="McLay K."/>
            <person name="Plumb B."/>
            <person name="Davis J."/>
            <person name="Clee C."/>
            <person name="Oliver K."/>
            <person name="Clark R."/>
            <person name="Riddle C."/>
            <person name="Elliot D."/>
            <person name="Threadgold G."/>
            <person name="Harden G."/>
            <person name="Ware D."/>
            <person name="Begum S."/>
            <person name="Mortimore B."/>
            <person name="Kerry G."/>
            <person name="Heath P."/>
            <person name="Phillimore B."/>
            <person name="Tracey A."/>
            <person name="Corby N."/>
            <person name="Dunn M."/>
            <person name="Johnson C."/>
            <person name="Wood J."/>
            <person name="Clark S."/>
            <person name="Pelan S."/>
            <person name="Griffiths G."/>
            <person name="Smith M."/>
            <person name="Glithero R."/>
            <person name="Howden P."/>
            <person name="Barker N."/>
            <person name="Lloyd C."/>
            <person name="Stevens C."/>
            <person name="Harley J."/>
            <person name="Holt K."/>
            <person name="Panagiotidis G."/>
            <person name="Lovell J."/>
            <person name="Beasley H."/>
            <person name="Henderson C."/>
            <person name="Gordon D."/>
            <person name="Auger K."/>
            <person name="Wright D."/>
            <person name="Collins J."/>
            <person name="Raisen C."/>
            <person name="Dyer L."/>
            <person name="Leung K."/>
            <person name="Robertson L."/>
            <person name="Ambridge K."/>
            <person name="Leongamornlert D."/>
            <person name="McGuire S."/>
            <person name="Gilderthorp R."/>
            <person name="Griffiths C."/>
            <person name="Manthravadi D."/>
            <person name="Nichol S."/>
            <person name="Barker G."/>
            <person name="Whitehead S."/>
            <person name="Kay M."/>
            <person name="Brown J."/>
            <person name="Murnane C."/>
            <person name="Gray E."/>
            <person name="Humphries M."/>
            <person name="Sycamore N."/>
            <person name="Barker D."/>
            <person name="Saunders D."/>
            <person name="Wallis J."/>
            <person name="Babbage A."/>
            <person name="Hammond S."/>
            <person name="Mashreghi-Mohammadi M."/>
            <person name="Barr L."/>
            <person name="Martin S."/>
            <person name="Wray P."/>
            <person name="Ellington A."/>
            <person name="Matthews N."/>
            <person name="Ellwood M."/>
            <person name="Woodmansey R."/>
            <person name="Clark G."/>
            <person name="Cooper J."/>
            <person name="Tromans A."/>
            <person name="Grafham D."/>
            <person name="Skuce C."/>
            <person name="Pandian R."/>
            <person name="Andrews R."/>
            <person name="Harrison E."/>
            <person name="Kimberley A."/>
            <person name="Garnett J."/>
            <person name="Fosker N."/>
            <person name="Hall R."/>
            <person name="Garner P."/>
            <person name="Kelly D."/>
            <person name="Bird C."/>
            <person name="Palmer S."/>
            <person name="Gehring I."/>
            <person name="Berger A."/>
            <person name="Dooley C.M."/>
            <person name="Ersan-Urun Z."/>
            <person name="Eser C."/>
            <person name="Geiger H."/>
            <person name="Geisler M."/>
            <person name="Karotki L."/>
            <person name="Kirn A."/>
            <person name="Konantz J."/>
            <person name="Konantz M."/>
            <person name="Oberlander M."/>
            <person name="Rudolph-Geiger S."/>
            <person name="Teucke M."/>
            <person name="Lanz C."/>
            <person name="Raddatz G."/>
            <person name="Osoegawa K."/>
            <person name="Zhu B."/>
            <person name="Rapp A."/>
            <person name="Widaa S."/>
            <person name="Langford C."/>
            <person name="Yang F."/>
            <person name="Schuster S.C."/>
            <person name="Carter N.P."/>
            <person name="Harrow J."/>
            <person name="Ning Z."/>
            <person name="Herrero J."/>
            <person name="Searle S.M."/>
            <person name="Enright A."/>
            <person name="Geisler R."/>
            <person name="Plasterk R.H."/>
            <person name="Lee C."/>
            <person name="Westerfield M."/>
            <person name="de Jong P.J."/>
            <person name="Zon L.I."/>
            <person name="Postlethwait J.H."/>
            <person name="Nusslein-Volhard C."/>
            <person name="Hubbard T.J."/>
            <person name="Roest Crollius H."/>
            <person name="Rogers J."/>
            <person name="Stemple D.L."/>
        </authorList>
    </citation>
    <scope>NUCLEOTIDE SEQUENCE [LARGE SCALE GENOMIC DNA]</scope>
    <source>
        <strain>Tuebingen</strain>
    </source>
</reference>
<reference key="3">
    <citation type="submission" date="2003-06" db="EMBL/GenBank/DDBJ databases">
        <authorList>
            <consortium name="NIH - Zebrafish Gene Collection (ZGC) project"/>
        </authorList>
    </citation>
    <scope>NUCLEOTIDE SEQUENCE [LARGE SCALE MRNA]</scope>
    <source>
        <tissue>Kidney</tissue>
    </source>
</reference>
<gene>
    <name type="primary">cisd2</name>
    <name type="ORF">dkey-162b23.1</name>
    <name type="ORF">zgc:64148</name>
</gene>
<dbReference type="EMBL" id="AY394933">
    <property type="protein sequence ID" value="AAQ94560.1"/>
    <property type="molecule type" value="mRNA"/>
</dbReference>
<dbReference type="EMBL" id="CR388005">
    <property type="protein sequence ID" value="CAX13850.1"/>
    <property type="status" value="ALT_SEQ"/>
    <property type="molecule type" value="Genomic_DNA"/>
</dbReference>
<dbReference type="EMBL" id="CR388005">
    <property type="protein sequence ID" value="CAX13851.1"/>
    <property type="molecule type" value="Genomic_DNA"/>
</dbReference>
<dbReference type="EMBL" id="BC053280">
    <property type="protein sequence ID" value="AAH53280.1"/>
    <property type="molecule type" value="mRNA"/>
</dbReference>
<dbReference type="RefSeq" id="NP_956677.1">
    <property type="nucleotide sequence ID" value="NM_200383.1"/>
</dbReference>
<dbReference type="SMR" id="Q7T326"/>
<dbReference type="BioGRID" id="89502">
    <property type="interactions" value="1"/>
</dbReference>
<dbReference type="FunCoup" id="Q7T326">
    <property type="interactions" value="1534"/>
</dbReference>
<dbReference type="STRING" id="7955.ENSDARP00000069092"/>
<dbReference type="PaxDb" id="7955-ENSDARP00000069092"/>
<dbReference type="Ensembl" id="ENSDART00000074604">
    <property type="protein sequence ID" value="ENSDARP00000069092"/>
    <property type="gene ID" value="ENSDARG00000052703"/>
</dbReference>
<dbReference type="GeneID" id="393354"/>
<dbReference type="KEGG" id="dre:393354"/>
<dbReference type="AGR" id="ZFIN:ZDB-GENE-040426-1381"/>
<dbReference type="CTD" id="493856"/>
<dbReference type="ZFIN" id="ZDB-GENE-040426-1381">
    <property type="gene designation" value="cisd2"/>
</dbReference>
<dbReference type="eggNOG" id="KOG3461">
    <property type="taxonomic scope" value="Eukaryota"/>
</dbReference>
<dbReference type="HOGENOM" id="CLU_132293_1_0_1"/>
<dbReference type="InParanoid" id="Q7T326"/>
<dbReference type="OMA" id="QIRKHEP"/>
<dbReference type="OrthoDB" id="449252at2759"/>
<dbReference type="PhylomeDB" id="Q7T326"/>
<dbReference type="TreeFam" id="TF324661"/>
<dbReference type="PRO" id="PR:Q7T326"/>
<dbReference type="Proteomes" id="UP000000437">
    <property type="component" value="Chromosome 1"/>
</dbReference>
<dbReference type="Bgee" id="ENSDARG00000052703">
    <property type="expression patterns" value="Expressed in cleaving embryo and 25 other cell types or tissues"/>
</dbReference>
<dbReference type="ExpressionAtlas" id="Q7T326">
    <property type="expression patterns" value="baseline and differential"/>
</dbReference>
<dbReference type="GO" id="GO:0005789">
    <property type="term" value="C:endoplasmic reticulum membrane"/>
    <property type="evidence" value="ECO:0000250"/>
    <property type="project" value="UniProtKB"/>
</dbReference>
<dbReference type="GO" id="GO:0005741">
    <property type="term" value="C:mitochondrial outer membrane"/>
    <property type="evidence" value="ECO:0000250"/>
    <property type="project" value="UniProtKB"/>
</dbReference>
<dbReference type="GO" id="GO:0051537">
    <property type="term" value="F:2 iron, 2 sulfur cluster binding"/>
    <property type="evidence" value="ECO:0000250"/>
    <property type="project" value="UniProtKB"/>
</dbReference>
<dbReference type="GO" id="GO:0046872">
    <property type="term" value="F:metal ion binding"/>
    <property type="evidence" value="ECO:0007669"/>
    <property type="project" value="UniProtKB-KW"/>
</dbReference>
<dbReference type="GO" id="GO:0042803">
    <property type="term" value="F:protein homodimerization activity"/>
    <property type="evidence" value="ECO:0000250"/>
    <property type="project" value="UniProtKB"/>
</dbReference>
<dbReference type="GO" id="GO:0000422">
    <property type="term" value="P:autophagy of mitochondrion"/>
    <property type="evidence" value="ECO:0000250"/>
    <property type="project" value="UniProtKB"/>
</dbReference>
<dbReference type="GO" id="GO:0010506">
    <property type="term" value="P:regulation of autophagy"/>
    <property type="evidence" value="ECO:0000250"/>
    <property type="project" value="UniProtKB"/>
</dbReference>
<dbReference type="FunFam" id="3.40.5.90:FF:000001">
    <property type="entry name" value="CDGSH iron-sulfur domain-containing protein 1"/>
    <property type="match status" value="1"/>
</dbReference>
<dbReference type="Gene3D" id="3.40.5.90">
    <property type="entry name" value="CDGSH iron-sulfur domain, mitoNEET-type"/>
    <property type="match status" value="1"/>
</dbReference>
<dbReference type="InterPro" id="IPR045131">
    <property type="entry name" value="CISD1/2"/>
</dbReference>
<dbReference type="InterPro" id="IPR018967">
    <property type="entry name" value="FeS-contain_CDGSH-typ"/>
</dbReference>
<dbReference type="InterPro" id="IPR019610">
    <property type="entry name" value="FeS-contain_mitoNEET_N"/>
</dbReference>
<dbReference type="InterPro" id="IPR042216">
    <property type="entry name" value="MitoNEET_CISD"/>
</dbReference>
<dbReference type="PANTHER" id="PTHR13680">
    <property type="entry name" value="CDGSH IRON-SULFUR DOMAIN-CONTAINING PROTEIN 1"/>
    <property type="match status" value="1"/>
</dbReference>
<dbReference type="PANTHER" id="PTHR13680:SF33">
    <property type="entry name" value="CDGSH IRON-SULFUR DOMAIN-CONTAINING PROTEIN 2"/>
    <property type="match status" value="1"/>
</dbReference>
<dbReference type="Pfam" id="PF10660">
    <property type="entry name" value="MitoNEET_N"/>
    <property type="match status" value="1"/>
</dbReference>
<dbReference type="Pfam" id="PF09360">
    <property type="entry name" value="zf-CDGSH"/>
    <property type="match status" value="1"/>
</dbReference>
<dbReference type="SMART" id="SM00704">
    <property type="entry name" value="ZnF_CDGSH"/>
    <property type="match status" value="1"/>
</dbReference>
<feature type="chain" id="PRO_0000392015" description="CDGSH iron-sulfur domain-containing protein 2">
    <location>
        <begin position="1"/>
        <end position="135"/>
    </location>
</feature>
<feature type="topological domain" description="Lumenal" evidence="2">
    <location>
        <begin position="1"/>
        <end position="37"/>
    </location>
</feature>
<feature type="transmembrane region" description="Helical" evidence="2">
    <location>
        <begin position="38"/>
        <end position="60"/>
    </location>
</feature>
<feature type="topological domain" description="Cytoplasmic" evidence="2">
    <location>
        <begin position="61"/>
        <end position="135"/>
    </location>
</feature>
<feature type="binding site" evidence="1">
    <location>
        <position position="99"/>
    </location>
    <ligand>
        <name>[2Fe-2S] cluster</name>
        <dbReference type="ChEBI" id="CHEBI:190135"/>
    </ligand>
</feature>
<feature type="binding site" evidence="1">
    <location>
        <position position="101"/>
    </location>
    <ligand>
        <name>[2Fe-2S] cluster</name>
        <dbReference type="ChEBI" id="CHEBI:190135"/>
    </ligand>
</feature>
<feature type="binding site" evidence="1">
    <location>
        <position position="110"/>
    </location>
    <ligand>
        <name>[2Fe-2S] cluster</name>
        <dbReference type="ChEBI" id="CHEBI:190135"/>
    </ligand>
</feature>
<feature type="binding site" evidence="1">
    <location>
        <position position="114"/>
    </location>
    <ligand>
        <name>[2Fe-2S] cluster</name>
        <dbReference type="ChEBI" id="CHEBI:190135"/>
    </ligand>
</feature>
<accession>Q7T326</accession>
<accession>B8JI01</accession>
<comment type="function">
    <text evidence="1">Regulator of autophagy that contributes to antagonize becn1-mediated cellular autophagy at the endoplasmic reticulum. Participates in the interaction of bcl2 with becn1 and is required for bcl2-mediated depression of endoplasmic reticulum Ca(2+) stores during autophagy (By similarity).</text>
</comment>
<comment type="cofactor">
    <cofactor evidence="1">
        <name>[2Fe-2S] cluster</name>
        <dbReference type="ChEBI" id="CHEBI:190135"/>
    </cofactor>
    <text evidence="1">Binds 1 [2Fe-2S] cluster.</text>
</comment>
<comment type="subunit">
    <text evidence="1">Homodimer.</text>
</comment>
<comment type="subcellular location">
    <subcellularLocation>
        <location evidence="1">Endoplasmic reticulum membrane</location>
        <topology evidence="1">Single-pass membrane protein</topology>
    </subcellularLocation>
    <subcellularLocation>
        <location evidence="1">Mitochondrion outer membrane</location>
        <topology evidence="1">Single-pass membrane protein</topology>
    </subcellularLocation>
</comment>
<comment type="similarity">
    <text evidence="3">Belongs to the CISD protein family. CISD2 subfamily.</text>
</comment>
<comment type="sequence caution" evidence="3">
    <conflict type="erroneous gene model prediction">
        <sequence resource="EMBL-CDS" id="CAX13850"/>
    </conflict>
</comment>